<evidence type="ECO:0000255" key="1">
    <source>
        <dbReference type="PROSITE-ProRule" id="PRU00977"/>
    </source>
</evidence>
<keyword id="KW-1185">Reference proteome</keyword>
<sequence length="99" mass="11255">MEEKNGWNIYMVTMKNGNIYTGISNNVLKRFDTHCNGKGAKCLRGKGPLKLSWFSKANYSHGEAASLEYTIKKQTKKVKLQIIKLNVLDVKTFLNGKMK</sequence>
<gene>
    <name type="ORF">IIV6-242L</name>
</gene>
<accession>Q91FT0</accession>
<proteinExistence type="predicted"/>
<organism>
    <name type="scientific">Invertebrate iridescent virus 6</name>
    <name type="common">IIV-6</name>
    <name type="synonym">Chilo iridescent virus</name>
    <dbReference type="NCBI Taxonomy" id="176652"/>
    <lineage>
        <taxon>Viruses</taxon>
        <taxon>Varidnaviria</taxon>
        <taxon>Bamfordvirae</taxon>
        <taxon>Nucleocytoviricota</taxon>
        <taxon>Megaviricetes</taxon>
        <taxon>Pimascovirales</taxon>
        <taxon>Iridoviridae</taxon>
        <taxon>Betairidovirinae</taxon>
        <taxon>Iridovirus</taxon>
    </lineage>
</organism>
<protein>
    <recommendedName>
        <fullName>Putative GIY-YIG domain-containing protein 242L</fullName>
    </recommendedName>
</protein>
<dbReference type="EMBL" id="AF303741">
    <property type="protein sequence ID" value="AAK82103.1"/>
    <property type="molecule type" value="Genomic_DNA"/>
</dbReference>
<dbReference type="RefSeq" id="NP_149705.1">
    <property type="nucleotide sequence ID" value="NC_003038.1"/>
</dbReference>
<dbReference type="SMR" id="Q91FT0"/>
<dbReference type="KEGG" id="vg:1733188"/>
<dbReference type="OrthoDB" id="27013at10239"/>
<dbReference type="Proteomes" id="UP000001359">
    <property type="component" value="Genome"/>
</dbReference>
<dbReference type="CDD" id="cd10456">
    <property type="entry name" value="GIY-YIG_UPF0213"/>
    <property type="match status" value="1"/>
</dbReference>
<dbReference type="Gene3D" id="3.40.1440.10">
    <property type="entry name" value="GIY-YIG endonuclease"/>
    <property type="match status" value="1"/>
</dbReference>
<dbReference type="InterPro" id="IPR000305">
    <property type="entry name" value="GIY-YIG_endonuc"/>
</dbReference>
<dbReference type="InterPro" id="IPR035901">
    <property type="entry name" value="GIY-YIG_endonuc_sf"/>
</dbReference>
<dbReference type="InterPro" id="IPR050190">
    <property type="entry name" value="UPF0213_domain"/>
</dbReference>
<dbReference type="PANTHER" id="PTHR34477">
    <property type="entry name" value="UPF0213 PROTEIN YHBQ"/>
    <property type="match status" value="1"/>
</dbReference>
<dbReference type="PANTHER" id="PTHR34477:SF1">
    <property type="entry name" value="UPF0213 PROTEIN YHBQ"/>
    <property type="match status" value="1"/>
</dbReference>
<dbReference type="Pfam" id="PF01541">
    <property type="entry name" value="GIY-YIG"/>
    <property type="match status" value="1"/>
</dbReference>
<dbReference type="SUPFAM" id="SSF82771">
    <property type="entry name" value="GIY-YIG endonuclease"/>
    <property type="match status" value="1"/>
</dbReference>
<dbReference type="PROSITE" id="PS50164">
    <property type="entry name" value="GIY_YIG"/>
    <property type="match status" value="1"/>
</dbReference>
<reference key="1">
    <citation type="journal article" date="2001" name="Virology">
        <title>Analysis of the first complete DNA sequence of an invertebrate iridovirus: coding strategy of the genome of Chilo iridescent virus.</title>
        <authorList>
            <person name="Jakob N.J."/>
            <person name="Mueller K."/>
            <person name="Bahr U."/>
            <person name="Darai G."/>
        </authorList>
    </citation>
    <scope>NUCLEOTIDE SEQUENCE [LARGE SCALE GENOMIC DNA]</scope>
</reference>
<reference key="2">
    <citation type="journal article" date="2007" name="Virol. J.">
        <title>Comparative genomic analysis of the family Iridoviridae: re-annotating and defining the core set of iridovirus genes.</title>
        <authorList>
            <person name="Eaton H.E."/>
            <person name="Metcalf J."/>
            <person name="Penny E."/>
            <person name="Tcherepanov V."/>
            <person name="Upton C."/>
            <person name="Brunetti C.R."/>
        </authorList>
    </citation>
    <scope>GENOME REANNOTATION</scope>
</reference>
<feature type="chain" id="PRO_0000377900" description="Putative GIY-YIG domain-containing protein 242L">
    <location>
        <begin position="1"/>
        <end position="99"/>
    </location>
</feature>
<feature type="domain" description="GIY-YIG" evidence="1">
    <location>
        <begin position="5"/>
        <end position="81"/>
    </location>
</feature>
<name>242L_IIV6</name>
<organismHost>
    <name type="scientific">Acheta domesticus</name>
    <name type="common">House cricket</name>
    <dbReference type="NCBI Taxonomy" id="6997"/>
</organismHost>
<organismHost>
    <name type="scientific">Chilo suppressalis</name>
    <name type="common">Asiatic rice borer moth</name>
    <dbReference type="NCBI Taxonomy" id="168631"/>
</organismHost>
<organismHost>
    <name type="scientific">Gryllus bimaculatus</name>
    <name type="common">Two-spotted cricket</name>
    <dbReference type="NCBI Taxonomy" id="6999"/>
</organismHost>
<organismHost>
    <name type="scientific">Gryllus campestris</name>
    <dbReference type="NCBI Taxonomy" id="58607"/>
</organismHost>
<organismHost>
    <name type="scientific">Spodoptera frugiperda</name>
    <name type="common">Fall armyworm</name>
    <dbReference type="NCBI Taxonomy" id="7108"/>
</organismHost>